<feature type="chain" id="PRO_1000007069" description="Large ribosomal subunit protein bL12">
    <location>
        <begin position="1"/>
        <end position="124"/>
    </location>
</feature>
<keyword id="KW-1185">Reference proteome</keyword>
<keyword id="KW-0687">Ribonucleoprotein</keyword>
<keyword id="KW-0689">Ribosomal protein</keyword>
<dbReference type="EMBL" id="CP000352">
    <property type="protein sequence ID" value="ABF10207.1"/>
    <property type="molecule type" value="Genomic_DNA"/>
</dbReference>
<dbReference type="RefSeq" id="WP_008649193.1">
    <property type="nucleotide sequence ID" value="NC_007973.1"/>
</dbReference>
<dbReference type="SMR" id="Q1LI19"/>
<dbReference type="STRING" id="266264.Rmet_3335"/>
<dbReference type="GeneID" id="60826582"/>
<dbReference type="KEGG" id="rme:Rmet_3335"/>
<dbReference type="eggNOG" id="COG0222">
    <property type="taxonomic scope" value="Bacteria"/>
</dbReference>
<dbReference type="HOGENOM" id="CLU_086499_3_2_4"/>
<dbReference type="Proteomes" id="UP000002429">
    <property type="component" value="Chromosome"/>
</dbReference>
<dbReference type="GO" id="GO:0022625">
    <property type="term" value="C:cytosolic large ribosomal subunit"/>
    <property type="evidence" value="ECO:0007669"/>
    <property type="project" value="TreeGrafter"/>
</dbReference>
<dbReference type="GO" id="GO:0003729">
    <property type="term" value="F:mRNA binding"/>
    <property type="evidence" value="ECO:0007669"/>
    <property type="project" value="TreeGrafter"/>
</dbReference>
<dbReference type="GO" id="GO:0003735">
    <property type="term" value="F:structural constituent of ribosome"/>
    <property type="evidence" value="ECO:0007669"/>
    <property type="project" value="InterPro"/>
</dbReference>
<dbReference type="GO" id="GO:0006412">
    <property type="term" value="P:translation"/>
    <property type="evidence" value="ECO:0007669"/>
    <property type="project" value="UniProtKB-UniRule"/>
</dbReference>
<dbReference type="CDD" id="cd00387">
    <property type="entry name" value="Ribosomal_L7_L12"/>
    <property type="match status" value="1"/>
</dbReference>
<dbReference type="FunFam" id="3.30.1390.10:FF:000001">
    <property type="entry name" value="50S ribosomal protein L7/L12"/>
    <property type="match status" value="1"/>
</dbReference>
<dbReference type="Gene3D" id="3.30.1390.10">
    <property type="match status" value="1"/>
</dbReference>
<dbReference type="Gene3D" id="1.20.5.710">
    <property type="entry name" value="Single helix bin"/>
    <property type="match status" value="1"/>
</dbReference>
<dbReference type="HAMAP" id="MF_00368">
    <property type="entry name" value="Ribosomal_bL12"/>
    <property type="match status" value="1"/>
</dbReference>
<dbReference type="InterPro" id="IPR000206">
    <property type="entry name" value="Ribosomal_bL12"/>
</dbReference>
<dbReference type="InterPro" id="IPR013823">
    <property type="entry name" value="Ribosomal_bL12_C"/>
</dbReference>
<dbReference type="InterPro" id="IPR014719">
    <property type="entry name" value="Ribosomal_bL12_C/ClpS-like"/>
</dbReference>
<dbReference type="InterPro" id="IPR008932">
    <property type="entry name" value="Ribosomal_bL12_oligo"/>
</dbReference>
<dbReference type="InterPro" id="IPR036235">
    <property type="entry name" value="Ribosomal_bL12_oligo_N_sf"/>
</dbReference>
<dbReference type="NCBIfam" id="TIGR00855">
    <property type="entry name" value="L12"/>
    <property type="match status" value="1"/>
</dbReference>
<dbReference type="PANTHER" id="PTHR45987">
    <property type="entry name" value="39S RIBOSOMAL PROTEIN L12"/>
    <property type="match status" value="1"/>
</dbReference>
<dbReference type="PANTHER" id="PTHR45987:SF4">
    <property type="entry name" value="LARGE RIBOSOMAL SUBUNIT PROTEIN BL12M"/>
    <property type="match status" value="1"/>
</dbReference>
<dbReference type="Pfam" id="PF00542">
    <property type="entry name" value="Ribosomal_L12"/>
    <property type="match status" value="1"/>
</dbReference>
<dbReference type="Pfam" id="PF16320">
    <property type="entry name" value="Ribosomal_L12_N"/>
    <property type="match status" value="1"/>
</dbReference>
<dbReference type="SUPFAM" id="SSF54736">
    <property type="entry name" value="ClpS-like"/>
    <property type="match status" value="1"/>
</dbReference>
<dbReference type="SUPFAM" id="SSF48300">
    <property type="entry name" value="Ribosomal protein L7/12, oligomerisation (N-terminal) domain"/>
    <property type="match status" value="1"/>
</dbReference>
<proteinExistence type="inferred from homology"/>
<comment type="function">
    <text evidence="1">Forms part of the ribosomal stalk which helps the ribosome interact with GTP-bound translation factors. Is thus essential for accurate translation.</text>
</comment>
<comment type="subunit">
    <text evidence="1">Homodimer. Part of the ribosomal stalk of the 50S ribosomal subunit. Forms a multimeric L10(L12)X complex, where L10 forms an elongated spine to which 2 to 4 L12 dimers bind in a sequential fashion. Binds GTP-bound translation factors.</text>
</comment>
<comment type="similarity">
    <text evidence="1">Belongs to the bacterial ribosomal protein bL12 family.</text>
</comment>
<evidence type="ECO:0000255" key="1">
    <source>
        <dbReference type="HAMAP-Rule" id="MF_00368"/>
    </source>
</evidence>
<evidence type="ECO:0000305" key="2"/>
<gene>
    <name evidence="1" type="primary">rplL</name>
    <name type="ordered locus">Rmet_3335</name>
</gene>
<accession>Q1LI19</accession>
<sequence>MAITKDDILEAVGAMSVMELNDLVKAFEEKFGVSAAAMAVAAAPGAGGAAAAEEKTEFNVILAEVGSNKVGVIKAVREITGLGLKEAKDLVDGAPKPVKEGVDKATADDAKKKLEDAGAKVDVK</sequence>
<reference key="1">
    <citation type="journal article" date="2010" name="PLoS ONE">
        <title>The complete genome sequence of Cupriavidus metallidurans strain CH34, a master survivalist in harsh and anthropogenic environments.</title>
        <authorList>
            <person name="Janssen P.J."/>
            <person name="Van Houdt R."/>
            <person name="Moors H."/>
            <person name="Monsieurs P."/>
            <person name="Morin N."/>
            <person name="Michaux A."/>
            <person name="Benotmane M.A."/>
            <person name="Leys N."/>
            <person name="Vallaeys T."/>
            <person name="Lapidus A."/>
            <person name="Monchy S."/>
            <person name="Medigue C."/>
            <person name="Taghavi S."/>
            <person name="McCorkle S."/>
            <person name="Dunn J."/>
            <person name="van der Lelie D."/>
            <person name="Mergeay M."/>
        </authorList>
    </citation>
    <scope>NUCLEOTIDE SEQUENCE [LARGE SCALE GENOMIC DNA]</scope>
    <source>
        <strain>ATCC 43123 / DSM 2839 / NBRC 102507 / CH34</strain>
    </source>
</reference>
<protein>
    <recommendedName>
        <fullName evidence="1">Large ribosomal subunit protein bL12</fullName>
    </recommendedName>
    <alternativeName>
        <fullName evidence="2">50S ribosomal protein L7/L12</fullName>
    </alternativeName>
</protein>
<name>RL7_CUPMC</name>
<organism>
    <name type="scientific">Cupriavidus metallidurans (strain ATCC 43123 / DSM 2839 / NBRC 102507 / CH34)</name>
    <name type="common">Ralstonia metallidurans</name>
    <dbReference type="NCBI Taxonomy" id="266264"/>
    <lineage>
        <taxon>Bacteria</taxon>
        <taxon>Pseudomonadati</taxon>
        <taxon>Pseudomonadota</taxon>
        <taxon>Betaproteobacteria</taxon>
        <taxon>Burkholderiales</taxon>
        <taxon>Burkholderiaceae</taxon>
        <taxon>Cupriavidus</taxon>
    </lineage>
</organism>